<organism>
    <name type="scientific">Francisella tularensis subsp. tularensis (strain SCHU S4 / Schu 4)</name>
    <dbReference type="NCBI Taxonomy" id="177416"/>
    <lineage>
        <taxon>Bacteria</taxon>
        <taxon>Pseudomonadati</taxon>
        <taxon>Pseudomonadota</taxon>
        <taxon>Gammaproteobacteria</taxon>
        <taxon>Thiotrichales</taxon>
        <taxon>Francisellaceae</taxon>
        <taxon>Francisella</taxon>
    </lineage>
</organism>
<comment type="function">
    <text evidence="1">One of the primary rRNA binding proteins, it binds directly to 16S rRNA central domain where it helps coordinate assembly of the platform of the 30S subunit.</text>
</comment>
<comment type="subunit">
    <text evidence="1">Part of the 30S ribosomal subunit. Contacts proteins S5 and S12.</text>
</comment>
<comment type="similarity">
    <text evidence="1">Belongs to the universal ribosomal protein uS8 family.</text>
</comment>
<gene>
    <name evidence="1" type="primary">rpsH</name>
    <name type="ordered locus">FTT_0339</name>
</gene>
<feature type="chain" id="PRO_0000126410" description="Small ribosomal subunit protein uS8">
    <location>
        <begin position="1"/>
        <end position="132"/>
    </location>
</feature>
<sequence length="132" mass="14397">MSMQDPIADMFTRIRNGLSAEKEFVSVPFSKIKMEIANFLVNEGYIKSCSKGTTSMGHPSIEVELKYHAGAPVIEMIKRVSRPSLRIYKSHADLPKVYGGYGVAIVSTSKGLVSDRKARDLGVGGEIIGYVA</sequence>
<accession>Q5NHV4</accession>
<proteinExistence type="inferred from homology"/>
<reference key="1">
    <citation type="journal article" date="2005" name="Nat. Genet.">
        <title>The complete genome sequence of Francisella tularensis, the causative agent of tularemia.</title>
        <authorList>
            <person name="Larsson P."/>
            <person name="Oyston P.C.F."/>
            <person name="Chain P."/>
            <person name="Chu M.C."/>
            <person name="Duffield M."/>
            <person name="Fuxelius H.-H."/>
            <person name="Garcia E."/>
            <person name="Haelltorp G."/>
            <person name="Johansson D."/>
            <person name="Isherwood K.E."/>
            <person name="Karp P.D."/>
            <person name="Larsson E."/>
            <person name="Liu Y."/>
            <person name="Michell S."/>
            <person name="Prior J."/>
            <person name="Prior R."/>
            <person name="Malfatti S."/>
            <person name="Sjoestedt A."/>
            <person name="Svensson K."/>
            <person name="Thompson N."/>
            <person name="Vergez L."/>
            <person name="Wagg J.K."/>
            <person name="Wren B.W."/>
            <person name="Lindler L.E."/>
            <person name="Andersson S.G.E."/>
            <person name="Forsman M."/>
            <person name="Titball R.W."/>
        </authorList>
    </citation>
    <scope>NUCLEOTIDE SEQUENCE [LARGE SCALE GENOMIC DNA]</scope>
    <source>
        <strain>SCHU S4 / Schu 4</strain>
    </source>
</reference>
<name>RS8_FRATT</name>
<dbReference type="EMBL" id="AJ749949">
    <property type="protein sequence ID" value="CAG44972.1"/>
    <property type="molecule type" value="Genomic_DNA"/>
</dbReference>
<dbReference type="RefSeq" id="WP_003017806.1">
    <property type="nucleotide sequence ID" value="NZ_CP010290.1"/>
</dbReference>
<dbReference type="RefSeq" id="YP_169388.1">
    <property type="nucleotide sequence ID" value="NC_006570.2"/>
</dbReference>
<dbReference type="SMR" id="Q5NHV4"/>
<dbReference type="STRING" id="177416.FTT_0339"/>
<dbReference type="DNASU" id="3190958"/>
<dbReference type="EnsemblBacteria" id="CAG44972">
    <property type="protein sequence ID" value="CAG44972"/>
    <property type="gene ID" value="FTT_0339"/>
</dbReference>
<dbReference type="KEGG" id="ftu:FTT_0339"/>
<dbReference type="eggNOG" id="COG0096">
    <property type="taxonomic scope" value="Bacteria"/>
</dbReference>
<dbReference type="OrthoDB" id="9802617at2"/>
<dbReference type="Proteomes" id="UP000001174">
    <property type="component" value="Chromosome"/>
</dbReference>
<dbReference type="GO" id="GO:1990904">
    <property type="term" value="C:ribonucleoprotein complex"/>
    <property type="evidence" value="ECO:0007669"/>
    <property type="project" value="UniProtKB-KW"/>
</dbReference>
<dbReference type="GO" id="GO:0005840">
    <property type="term" value="C:ribosome"/>
    <property type="evidence" value="ECO:0007669"/>
    <property type="project" value="UniProtKB-KW"/>
</dbReference>
<dbReference type="GO" id="GO:0019843">
    <property type="term" value="F:rRNA binding"/>
    <property type="evidence" value="ECO:0007669"/>
    <property type="project" value="UniProtKB-UniRule"/>
</dbReference>
<dbReference type="GO" id="GO:0003735">
    <property type="term" value="F:structural constituent of ribosome"/>
    <property type="evidence" value="ECO:0007669"/>
    <property type="project" value="InterPro"/>
</dbReference>
<dbReference type="GO" id="GO:0006412">
    <property type="term" value="P:translation"/>
    <property type="evidence" value="ECO:0007669"/>
    <property type="project" value="UniProtKB-UniRule"/>
</dbReference>
<dbReference type="FunFam" id="3.30.1490.10:FF:000001">
    <property type="entry name" value="30S ribosomal protein S8"/>
    <property type="match status" value="1"/>
</dbReference>
<dbReference type="Gene3D" id="3.30.1370.30">
    <property type="match status" value="1"/>
</dbReference>
<dbReference type="Gene3D" id="3.30.1490.10">
    <property type="match status" value="1"/>
</dbReference>
<dbReference type="HAMAP" id="MF_01302_B">
    <property type="entry name" value="Ribosomal_uS8_B"/>
    <property type="match status" value="1"/>
</dbReference>
<dbReference type="InterPro" id="IPR000630">
    <property type="entry name" value="Ribosomal_uS8"/>
</dbReference>
<dbReference type="InterPro" id="IPR047863">
    <property type="entry name" value="Ribosomal_uS8_CS"/>
</dbReference>
<dbReference type="InterPro" id="IPR035987">
    <property type="entry name" value="Ribosomal_uS8_sf"/>
</dbReference>
<dbReference type="NCBIfam" id="NF001109">
    <property type="entry name" value="PRK00136.1"/>
    <property type="match status" value="1"/>
</dbReference>
<dbReference type="PANTHER" id="PTHR11758">
    <property type="entry name" value="40S RIBOSOMAL PROTEIN S15A"/>
    <property type="match status" value="1"/>
</dbReference>
<dbReference type="Pfam" id="PF00410">
    <property type="entry name" value="Ribosomal_S8"/>
    <property type="match status" value="1"/>
</dbReference>
<dbReference type="SUPFAM" id="SSF56047">
    <property type="entry name" value="Ribosomal protein S8"/>
    <property type="match status" value="1"/>
</dbReference>
<dbReference type="PROSITE" id="PS00053">
    <property type="entry name" value="RIBOSOMAL_S8"/>
    <property type="match status" value="1"/>
</dbReference>
<protein>
    <recommendedName>
        <fullName evidence="1">Small ribosomal subunit protein uS8</fullName>
    </recommendedName>
    <alternativeName>
        <fullName evidence="2">30S ribosomal protein S8</fullName>
    </alternativeName>
</protein>
<evidence type="ECO:0000255" key="1">
    <source>
        <dbReference type="HAMAP-Rule" id="MF_01302"/>
    </source>
</evidence>
<evidence type="ECO:0000305" key="2"/>
<keyword id="KW-1185">Reference proteome</keyword>
<keyword id="KW-0687">Ribonucleoprotein</keyword>
<keyword id="KW-0689">Ribosomal protein</keyword>
<keyword id="KW-0694">RNA-binding</keyword>
<keyword id="KW-0699">rRNA-binding</keyword>